<comment type="function">
    <text evidence="3">Calcium-binding protein that interacts with rotavirus cell receptors once the initial attachment by VP4 has been achieved. Rotavirus attachment and entry into the host cell probably involves multiple sequential contacts between the outer capsid proteins VP4 and VP7, and the cell receptors. Following entry into the host cell, low intracellular or intravesicular Ca(2+) concentration probably causes the calcium-stabilized VP7 trimers to dissociate from the virion. This step is probably necessary for the membrane-disrupting entry step and the release of VP4, which is locked onto the virion by VP7.</text>
</comment>
<comment type="subunit">
    <text evidence="3">Homotrimer; disulfide-linked. 2 Ca(2+) ions bound at each subunit interface in the trimer hold the trimer together. Interacts with the intermediate capsid protein VP6. Interacts with the outer capsid protein VP5*.</text>
</comment>
<comment type="subcellular location">
    <subcellularLocation>
        <location evidence="3">Virion</location>
    </subcellularLocation>
    <subcellularLocation>
        <location evidence="3">Host endoplasmic reticulum lumen</location>
    </subcellularLocation>
    <text evidence="3">The outer layer contains 780 copies of VP7, grouped as 260 trimers. Immature double-layered particles assembled in the cytoplasm bud across the membrane of the endoplasmic reticulum, acquiring during this process a transient lipid membrane that is modified with the ER resident viral glycoproteins NSP4 and VP7; these enveloped particles also contain VP4. As the particles move towards the interior of the ER. cisternae, the transient lipid membrane and the non-structural protein NSP4 are lost, while the virus surface proteins VP4 and VP7 rearrange to form the outermost virus protein layer, yielding mature infectious triple-layered particles.</text>
</comment>
<comment type="alternative products">
    <event type="alternative initiation"/>
    <isoform>
        <id>Q76WK3-1</id>
        <name>1</name>
        <sequence type="displayed"/>
    </isoform>
    <isoform>
        <id>Q76WK3-2</id>
        <name>2</name>
        <sequence type="described" ref="VSP_038621"/>
    </isoform>
</comment>
<comment type="PTM">
    <text evidence="1">Intramolecular disulfide bonds.</text>
</comment>
<comment type="PTM">
    <text evidence="3">N-glycosylated.</text>
</comment>
<comment type="PTM">
    <text evidence="3">The N-terminus is blocked possibly by pyroglutamic acid.</text>
</comment>
<comment type="miscellaneous">
    <text evidence="3 4">Some rotavirus strains are neuraminidase-sensitive and require sialic acid to attach to the cell surface. Some rotavirus strains are integrin-dependent. Some rotavirus strains depend on ganglioside for their entry into the host cell. Hsp70 also seems to be involved in the entry of some strains.</text>
</comment>
<comment type="miscellaneous">
    <text evidence="3">In group A rotaviruses, VP7 defines the G serotype.</text>
</comment>
<comment type="miscellaneous">
    <molecule>Isoform 2</molecule>
    <text evidence="5">Produced by alternative initiation at Met-30 of isoform 1.</text>
</comment>
<comment type="similarity">
    <text evidence="3">Belongs to the rotavirus VP7 family.</text>
</comment>
<organismHost>
    <name type="scientific">Homo sapiens</name>
    <name type="common">Human</name>
    <dbReference type="NCBI Taxonomy" id="9606"/>
</organismHost>
<feature type="signal peptide" evidence="3">
    <location>
        <begin position="1"/>
        <end position="50"/>
    </location>
</feature>
<feature type="chain" id="PRO_0000369113" description="Outer capsid glycoprotein VP7" evidence="3">
    <location>
        <begin position="51"/>
        <end position="326"/>
    </location>
</feature>
<feature type="region of interest" description="CNP motif; interaction with ITGAV/ITGB3" evidence="3">
    <location>
        <begin position="165"/>
        <end position="167"/>
    </location>
</feature>
<feature type="region of interest" description="GPR motif; interaction with ITGAX/ITGB2" evidence="3">
    <location>
        <begin position="253"/>
        <end position="255"/>
    </location>
</feature>
<feature type="binding site" evidence="3">
    <location>
        <position position="95"/>
    </location>
    <ligand>
        <name>Ca(2+)</name>
        <dbReference type="ChEBI" id="CHEBI:29108"/>
        <label>1</label>
    </ligand>
</feature>
<feature type="binding site" evidence="3">
    <location>
        <position position="177"/>
    </location>
    <ligand>
        <name>Ca(2+)</name>
        <dbReference type="ChEBI" id="CHEBI:29108"/>
        <label>2</label>
    </ligand>
</feature>
<feature type="binding site" evidence="3">
    <location>
        <position position="206"/>
    </location>
    <ligand>
        <name>Ca(2+)</name>
        <dbReference type="ChEBI" id="CHEBI:29108"/>
        <label>1</label>
    </ligand>
</feature>
<feature type="binding site" evidence="3">
    <location>
        <position position="214"/>
    </location>
    <ligand>
        <name>Ca(2+)</name>
        <dbReference type="ChEBI" id="CHEBI:29108"/>
        <label>1</label>
    </ligand>
</feature>
<feature type="binding site" evidence="3">
    <location>
        <position position="216"/>
    </location>
    <ligand>
        <name>Ca(2+)</name>
        <dbReference type="ChEBI" id="CHEBI:29108"/>
        <label>1</label>
    </ligand>
</feature>
<feature type="binding site" evidence="3">
    <location>
        <position position="228"/>
    </location>
    <ligand>
        <name>Ca(2+)</name>
        <dbReference type="ChEBI" id="CHEBI:29108"/>
        <label>2</label>
    </ligand>
</feature>
<feature type="binding site" evidence="3">
    <location>
        <position position="229"/>
    </location>
    <ligand>
        <name>Ca(2+)</name>
        <dbReference type="ChEBI" id="CHEBI:29108"/>
        <label>2</label>
    </ligand>
</feature>
<feature type="binding site" evidence="3">
    <location>
        <position position="231"/>
    </location>
    <ligand>
        <name>Ca(2+)</name>
        <dbReference type="ChEBI" id="CHEBI:29108"/>
        <label>2</label>
    </ligand>
</feature>
<feature type="binding site" evidence="3">
    <location>
        <position position="301"/>
    </location>
    <ligand>
        <name>Ca(2+)</name>
        <dbReference type="ChEBI" id="CHEBI:29108"/>
        <label>2</label>
    </ligand>
</feature>
<feature type="glycosylation site" description="N-linked (GlcNAc...) asparagine; by host" evidence="2">
    <location>
        <position position="69"/>
    </location>
</feature>
<feature type="glycosylation site" description="N-linked (GlcNAc...) asparagine; by host" evidence="2">
    <location>
        <position position="238"/>
    </location>
</feature>
<feature type="disulfide bond" evidence="3">
    <location>
        <begin position="82"/>
        <end position="135"/>
    </location>
</feature>
<feature type="disulfide bond" evidence="3">
    <location>
        <begin position="165"/>
        <end position="249"/>
    </location>
</feature>
<feature type="disulfide bond" evidence="3">
    <location>
        <begin position="191"/>
        <end position="244"/>
    </location>
</feature>
<feature type="disulfide bond" evidence="3">
    <location>
        <begin position="196"/>
        <end position="207"/>
    </location>
</feature>
<feature type="splice variant" id="VSP_038621" description="In isoform 2." evidence="5">
    <location>
        <begin position="1"/>
        <end position="29"/>
    </location>
</feature>
<feature type="sequence conflict" description="In Ref. 2; BAE78582." evidence="5" ref="2">
    <original>E</original>
    <variation>V</variation>
    <location>
        <position position="149"/>
    </location>
</feature>
<organism>
    <name type="scientific">Rotavirus A (strain RVA/Human/Japan/KU/1995/G1P1A[8])</name>
    <name type="common">RV-A</name>
    <dbReference type="NCBI Taxonomy" id="10952"/>
    <lineage>
        <taxon>Viruses</taxon>
        <taxon>Riboviria</taxon>
        <taxon>Orthornavirae</taxon>
        <taxon>Duplornaviricota</taxon>
        <taxon>Resentoviricetes</taxon>
        <taxon>Reovirales</taxon>
        <taxon>Sedoreoviridae</taxon>
        <taxon>Rotavirus</taxon>
        <taxon>Rotavirus A</taxon>
    </lineage>
</organism>
<name>VP7_ROTHK</name>
<evidence type="ECO:0000250" key="1"/>
<evidence type="ECO:0000255" key="2"/>
<evidence type="ECO:0000255" key="3">
    <source>
        <dbReference type="HAMAP-Rule" id="MF_04131"/>
    </source>
</evidence>
<evidence type="ECO:0000303" key="4">
    <source>
    </source>
</evidence>
<evidence type="ECO:0000305" key="5"/>
<proteinExistence type="evidence at transcript level"/>
<reference key="1">
    <citation type="journal article" date="1988" name="J. Virol.">
        <title>Cross-reactive and serotype-specific neutralization epitopes on VP7 of human rotavirus: nucleotide sequence analysis of antigenic mutants selected with monoclonal antibodies.</title>
        <authorList>
            <person name="Taniguchi K."/>
            <person name="Hoshino Y."/>
            <person name="Nishikawa K."/>
            <person name="Green K.Y."/>
            <person name="Maloy W.L."/>
            <person name="Morita Y."/>
            <person name="Urasawa S."/>
            <person name="Kapikian A.Z."/>
            <person name="Chanock R.M."/>
            <person name="Gorziglia M."/>
        </authorList>
    </citation>
    <scope>NUCLEOTIDE SEQUENCE [MRNA]</scope>
</reference>
<reference key="2">
    <citation type="journal article" date="2006" name="J. Virol.">
        <title>High-resolution molecular and antigen structure of the VP8* core of a sialic acid-independent human rotavirus strain.</title>
        <authorList>
            <person name="Monnier N."/>
            <person name="Higo-Moriguchi K."/>
            <person name="Sun Z.Y."/>
            <person name="Prasad B.V.V."/>
            <person name="Taniguchi K."/>
            <person name="Dormitzer P.R."/>
        </authorList>
    </citation>
    <scope>NUCLEOTIDE SEQUENCE [GENOMIC RNA]</scope>
</reference>
<reference key="3">
    <citation type="journal article" date="2004" name="Trends Microbiol.">
        <title>Multistep entry of rotavirus into cells: a Versaillesque dance.</title>
        <authorList>
            <person name="Lopez S."/>
            <person name="Arias C.F."/>
        </authorList>
    </citation>
    <scope>REVIEW</scope>
</reference>
<protein>
    <recommendedName>
        <fullName evidence="3">Outer capsid glycoprotein VP7</fullName>
    </recommendedName>
</protein>
<dbReference type="EMBL" id="D16343">
    <property type="protein sequence ID" value="BAA03847.1"/>
    <property type="molecule type" value="mRNA"/>
</dbReference>
<dbReference type="EMBL" id="AB222787">
    <property type="protein sequence ID" value="BAE78581.1"/>
    <property type="molecule type" value="Genomic_RNA"/>
</dbReference>
<dbReference type="EMBL" id="AB222788">
    <property type="protein sequence ID" value="BAE78582.1"/>
    <property type="molecule type" value="Genomic_RNA"/>
</dbReference>
<dbReference type="SMR" id="Q76WK3"/>
<dbReference type="Proteomes" id="UP000001458">
    <property type="component" value="Genome"/>
</dbReference>
<dbReference type="GO" id="GO:0044166">
    <property type="term" value="C:host cell endoplasmic reticulum lumen"/>
    <property type="evidence" value="ECO:0007669"/>
    <property type="project" value="UniProtKB-SubCell"/>
</dbReference>
<dbReference type="GO" id="GO:0039621">
    <property type="term" value="C:T=13 icosahedral viral capsid"/>
    <property type="evidence" value="ECO:0007669"/>
    <property type="project" value="UniProtKB-UniRule"/>
</dbReference>
<dbReference type="GO" id="GO:0039624">
    <property type="term" value="C:viral outer capsid"/>
    <property type="evidence" value="ECO:0007669"/>
    <property type="project" value="UniProtKB-UniRule"/>
</dbReference>
<dbReference type="GO" id="GO:0046872">
    <property type="term" value="F:metal ion binding"/>
    <property type="evidence" value="ECO:0007669"/>
    <property type="project" value="UniProtKB-KW"/>
</dbReference>
<dbReference type="Gene3D" id="3.40.50.11130">
    <property type="entry name" value="Glycoprotein VP7, domain 1"/>
    <property type="match status" value="1"/>
</dbReference>
<dbReference type="Gene3D" id="2.60.120.800">
    <property type="entry name" value="Rotavirus outer-layer protein VP7, domain 2"/>
    <property type="match status" value="1"/>
</dbReference>
<dbReference type="HAMAP" id="MF_04130">
    <property type="entry name" value="Rota_VP7"/>
    <property type="match status" value="1"/>
</dbReference>
<dbReference type="HAMAP" id="MF_04131">
    <property type="entry name" value="Rota_VP7_A"/>
    <property type="match status" value="1"/>
</dbReference>
<dbReference type="InterPro" id="IPR001963">
    <property type="entry name" value="VP7"/>
</dbReference>
<dbReference type="InterPro" id="IPR042207">
    <property type="entry name" value="VP7_1"/>
</dbReference>
<dbReference type="InterPro" id="IPR042210">
    <property type="entry name" value="VP7_2"/>
</dbReference>
<dbReference type="Pfam" id="PF00434">
    <property type="entry name" value="VP7"/>
    <property type="match status" value="1"/>
</dbReference>
<sequence>MYGIEYTTILIFLISIILLNYILKSVTRIMDYIIYRFLLITVALFALTRAQNYGLNLPITGSMDTVYTNSTQEEVFLTSTLCLYYPTEASTQINDGDWKDSLSQMFLTKGWPTGSVYFKEYSSIVDFSVDPQLYCDYNLVLMKYDQSLELDMSELADLILNEWLCNPMDITLYYYQQSGESNKWISMGSSCTVKVCPLNTQTLGIGCQTTNVDSFEMVAENEKLAIVDVVDGINHKINLTTTTCTIRNCKKLGPRENVAVIQVGGSNVLDITADPTTNPQTERMMRVNWKKWWQVFYTIVDYINQIVQVMSKRSRSLNSAAFYYRV</sequence>
<keyword id="KW-0024">Alternative initiation</keyword>
<keyword id="KW-0106">Calcium</keyword>
<keyword id="KW-0167">Capsid protein</keyword>
<keyword id="KW-1015">Disulfide bond</keyword>
<keyword id="KW-0325">Glycoprotein</keyword>
<keyword id="KW-1038">Host endoplasmic reticulum</keyword>
<keyword id="KW-0945">Host-virus interaction</keyword>
<keyword id="KW-0479">Metal-binding</keyword>
<keyword id="KW-1152">Outer capsid protein</keyword>
<keyword id="KW-0732">Signal</keyword>
<keyword id="KW-1146">T=13 icosahedral capsid protein</keyword>
<keyword id="KW-0946">Virion</keyword>
<accession>Q76WK3</accession>
<accession>Q2MH33</accession>
<accession>Q2MH34</accession>